<accession>P0AF18</accession>
<accession>P15300</accession>
<gene>
    <name type="primary">nagA</name>
    <name type="ordered locus">b0677</name>
    <name type="ordered locus">JW0663</name>
</gene>
<reference key="1">
    <citation type="journal article" date="1989" name="Mol. Microbiol.">
        <title>Sequence of the nagBACD operon in Escherichia coli K12 and pattern of transcription within the nag regulon.</title>
        <authorList>
            <person name="Plumbridge J."/>
        </authorList>
    </citation>
    <scope>NUCLEOTIDE SEQUENCE [GENOMIC DNA]</scope>
    <source>
        <strain>K12</strain>
    </source>
</reference>
<reference key="2">
    <citation type="journal article" date="1990" name="Biochem. Cell Biol.">
        <title>Cloning and characterization of the N-acetylglucosamine operon of Escherichia coli.</title>
        <authorList>
            <person name="Peri K.G."/>
            <person name="Goldie H."/>
            <person name="Waygood E.B."/>
        </authorList>
    </citation>
    <scope>NUCLEOTIDE SEQUENCE [GENOMIC DNA]</scope>
    <scope>FUNCTION</scope>
    <source>
        <strain>K12</strain>
    </source>
</reference>
<reference key="3">
    <citation type="journal article" date="1996" name="DNA Res.">
        <title>A 718-kb DNA sequence of the Escherichia coli K-12 genome corresponding to the 12.7-28.0 min region on the linkage map.</title>
        <authorList>
            <person name="Oshima T."/>
            <person name="Aiba H."/>
            <person name="Baba T."/>
            <person name="Fujita K."/>
            <person name="Hayashi K."/>
            <person name="Honjo A."/>
            <person name="Ikemoto K."/>
            <person name="Inada T."/>
            <person name="Itoh T."/>
            <person name="Kajihara M."/>
            <person name="Kanai K."/>
            <person name="Kashimoto K."/>
            <person name="Kimura S."/>
            <person name="Kitagawa M."/>
            <person name="Makino K."/>
            <person name="Masuda S."/>
            <person name="Miki T."/>
            <person name="Mizobuchi K."/>
            <person name="Mori H."/>
            <person name="Motomura K."/>
            <person name="Nakamura Y."/>
            <person name="Nashimoto H."/>
            <person name="Nishio Y."/>
            <person name="Saito N."/>
            <person name="Sampei G."/>
            <person name="Seki Y."/>
            <person name="Tagami H."/>
            <person name="Takemoto K."/>
            <person name="Wada C."/>
            <person name="Yamamoto Y."/>
            <person name="Yano M."/>
            <person name="Horiuchi T."/>
        </authorList>
    </citation>
    <scope>NUCLEOTIDE SEQUENCE [LARGE SCALE GENOMIC DNA]</scope>
    <source>
        <strain>K12 / W3110 / ATCC 27325 / DSM 5911</strain>
    </source>
</reference>
<reference key="4">
    <citation type="journal article" date="1997" name="Science">
        <title>The complete genome sequence of Escherichia coli K-12.</title>
        <authorList>
            <person name="Blattner F.R."/>
            <person name="Plunkett G. III"/>
            <person name="Bloch C.A."/>
            <person name="Perna N.T."/>
            <person name="Burland V."/>
            <person name="Riley M."/>
            <person name="Collado-Vides J."/>
            <person name="Glasner J.D."/>
            <person name="Rode C.K."/>
            <person name="Mayhew G.F."/>
            <person name="Gregor J."/>
            <person name="Davis N.W."/>
            <person name="Kirkpatrick H.A."/>
            <person name="Goeden M.A."/>
            <person name="Rose D.J."/>
            <person name="Mau B."/>
            <person name="Shao Y."/>
        </authorList>
    </citation>
    <scope>NUCLEOTIDE SEQUENCE [LARGE SCALE GENOMIC DNA]</scope>
    <source>
        <strain>K12 / MG1655 / ATCC 47076</strain>
    </source>
</reference>
<reference key="5">
    <citation type="journal article" date="2006" name="Mol. Syst. Biol.">
        <title>Highly accurate genome sequences of Escherichia coli K-12 strains MG1655 and W3110.</title>
        <authorList>
            <person name="Hayashi K."/>
            <person name="Morooka N."/>
            <person name="Yamamoto Y."/>
            <person name="Fujita K."/>
            <person name="Isono K."/>
            <person name="Choi S."/>
            <person name="Ohtsubo E."/>
            <person name="Baba T."/>
            <person name="Wanner B.L."/>
            <person name="Mori H."/>
            <person name="Horiuchi T."/>
        </authorList>
    </citation>
    <scope>NUCLEOTIDE SEQUENCE [LARGE SCALE GENOMIC DNA]</scope>
    <source>
        <strain>K12 / W3110 / ATCC 27325 / DSM 5911</strain>
    </source>
</reference>
<reference key="6">
    <citation type="journal article" date="1967" name="Biochem. J.">
        <title>The purification and properties of N-acetylglucosamine 6-phosphate deacetylase from Escherichia coli.</title>
        <authorList>
            <person name="White R.J."/>
            <person name="Pasternak C.A."/>
        </authorList>
    </citation>
    <scope>FUNCTION</scope>
    <scope>CATALYTIC ACTIVITY</scope>
    <scope>ACTIVITY REGULATION</scope>
    <scope>BIOPHYSICOCHEMICAL PROPERTIES</scope>
    <source>
        <strain>K12</strain>
    </source>
</reference>
<reference key="7">
    <citation type="journal article" date="1993" name="J. Bacteriol.">
        <title>Coordinated regulation of amino sugar-synthesizing and -degrading enzymes in Escherichia coli K-12.</title>
        <authorList>
            <person name="Plumbridge J.A."/>
            <person name="Cochet O."/>
            <person name="Souza J.M."/>
            <person name="Altamirano M.M."/>
            <person name="Calcagno M.L."/>
            <person name="Badet B."/>
        </authorList>
    </citation>
    <scope>DISRUPTION PHENOTYPE</scope>
    <source>
        <strain>K12</strain>
    </source>
</reference>
<reference key="8">
    <citation type="journal article" date="1997" name="Arch. Biochem. Biophys.">
        <title>N-acetylglucosamine-6-phosphate deacetylase from Escherichia coli: purification and molecular and kinetic characterization.</title>
        <authorList>
            <person name="Souza J.M."/>
            <person name="Plumbridge J.A."/>
            <person name="Calcagno M.L."/>
        </authorList>
    </citation>
    <scope>FUNCTION</scope>
    <scope>CATALYTIC ACTIVITY</scope>
    <scope>ACTIVITY REGULATION</scope>
    <scope>BIOPHYSICOCHEMICAL PROPERTIES</scope>
    <scope>SUBUNIT</scope>
    <scope>CIRCULAR DICHROISM</scope>
    <scope>REACTION MECHANISM</scope>
    <source>
        <strain>K12</strain>
    </source>
</reference>
<reference key="9">
    <citation type="journal article" date="2000" name="Acta Crystallogr. D">
        <title>Crystallization and preliminary crystallographic analysis of N-acetylglucosamine 6-phosphate deacetylase from Escherichia coli.</title>
        <authorList>
            <person name="Ferreira F.M."/>
            <person name="Mendoza-Hernandez G."/>
            <person name="Calcagno M.L."/>
            <person name="Minauro F."/>
            <person name="Delboni L.F."/>
            <person name="Oliva G."/>
        </authorList>
    </citation>
    <scope>CRYSTALLIZATION</scope>
    <source>
        <strain>K12</strain>
    </source>
</reference>
<reference key="10">
    <citation type="journal article" date="2003" name="J. Bacteriol.">
        <title>Identification and molecular characterization of the Mg2+ stimulon of Escherichia coli.</title>
        <authorList>
            <person name="Minagawa S."/>
            <person name="Ogasawara H."/>
            <person name="Kato A."/>
            <person name="Yamamoto K."/>
            <person name="Eguchi Y."/>
            <person name="Oshima T."/>
            <person name="Mori H."/>
            <person name="Ishihama A."/>
            <person name="Utsumi R."/>
        </authorList>
    </citation>
    <scope>INDUCTION</scope>
    <source>
        <strain>K12</strain>
    </source>
</reference>
<reference key="11">
    <citation type="journal article" date="2007" name="Biochemistry">
        <title>N-Acetyl-D-glucosamine-6-phosphate deacetylase: substrate activation via a single divalent metal ion.</title>
        <authorList>
            <person name="Hall R.S."/>
            <person name="Xiang D.F."/>
            <person name="Xu C."/>
            <person name="Raushel F.M."/>
        </authorList>
    </citation>
    <scope>FUNCTION</scope>
    <scope>CATALYTIC ACTIVITY</scope>
    <scope>COFACTOR</scope>
    <scope>SUBSTRATE SPECIFICITY</scope>
    <scope>ACTIVITY REGULATION</scope>
    <scope>BIOPHYSICOCHEMICAL PROPERTIES</scope>
    <scope>SUBUNIT</scope>
    <scope>MUTAGENESIS OF GLN-59; ASN-61; GLU-131; HIS-143; HIS-251 AND ASP-273</scope>
    <scope>REACTION MECHANISM</scope>
    <source>
        <strain>K12</strain>
    </source>
</reference>
<reference key="12">
    <citation type="journal article" date="2006" name="J. Mol. Biol.">
        <title>Structural analysis of N-acetylglucosamine-6-phosphate deacetylase apoenzyme from Escherichia coli.</title>
        <authorList>
            <person name="Ferreira F.M."/>
            <person name="Mendoza-Hernandez G."/>
            <person name="Castaneda-Bueno M."/>
            <person name="Aparicio R."/>
            <person name="Fischer H."/>
            <person name="Calcagno M.L."/>
            <person name="Oliva G."/>
        </authorList>
    </citation>
    <scope>X-RAY CRYSTALLOGRAPHY (2.00 ANGSTROMS) OF APOENZYME</scope>
    <scope>FUNCTION</scope>
    <scope>CATALYTIC ACTIVITY</scope>
    <scope>COFACTOR</scope>
    <scope>ACTIVITY REGULATION</scope>
    <scope>SUBUNIT</scope>
    <source>
        <strain>K12</strain>
    </source>
</reference>
<reference key="13">
    <citation type="journal article" date="2007" name="Biochemistry">
        <title>Structural diversity within the mononuclear and binuclear active sites of N-acetyl-D-glucosamine-6-phosphate deacetylase.</title>
        <authorList>
            <person name="Hall R.S."/>
            <person name="Brown S."/>
            <person name="Fedorov A.A."/>
            <person name="Fedorov E.V."/>
            <person name="Xu C."/>
            <person name="Babbitt P.C."/>
            <person name="Almo S.C."/>
            <person name="Raushel F.M."/>
        </authorList>
    </citation>
    <scope>X-RAY CRYSTALLOGRAPHY (2.10 ANGSTROMS) OF APOENZYME; WILD-TYPE IN COMPLEX WITH ZINC AND MUTANT ASN-273 IN COMPLEX WITH TRANSITION STATE INHIBITOR AND ZINC</scope>
    <scope>FUNCTION</scope>
    <scope>CATALYTIC ACTIVITY</scope>
    <scope>MUTAGENESIS OF ASP-273</scope>
    <scope>COFACTOR</scope>
    <scope>SUBUNIT</scope>
    <scope>ACTIVE SITE</scope>
    <source>
        <strain>K12</strain>
    </source>
</reference>
<comment type="function">
    <text evidence="2 3 4 5 6 8">Involved in the first step in the biosynthesis of amino-sugar-nucleotides. Catalyzes the hydrolysis of the N-acetyl group of N-acetylglucosamine-6-phosphate (GlcNAc-6-P) to yield glucosamine 6-phosphate and acetate. In vitro, can also hydrolyze substrate analogs such as N-thioacetyl-D-glucosamine-6-phosphate, N-trifluoroacetyl-D-glucosamine-6-phosphate, N-acetyl-D-glucosamine-6-sulfate, N-acetyl-D-galactosamine-6-phosphate, and N-formyl-D-glucosamine-6-phosphate.</text>
</comment>
<comment type="catalytic activity">
    <reaction evidence="2 3 4 6 8">
        <text>N-acetyl-D-glucosamine 6-phosphate + H2O = D-glucosamine 6-phosphate + acetate</text>
        <dbReference type="Rhea" id="RHEA:22936"/>
        <dbReference type="ChEBI" id="CHEBI:15377"/>
        <dbReference type="ChEBI" id="CHEBI:30089"/>
        <dbReference type="ChEBI" id="CHEBI:57513"/>
        <dbReference type="ChEBI" id="CHEBI:58725"/>
        <dbReference type="EC" id="3.5.1.25"/>
    </reaction>
</comment>
<comment type="cofactor">
    <cofactor evidence="2 3 4">
        <name>Zn(2+)</name>
        <dbReference type="ChEBI" id="CHEBI:29105"/>
    </cofactor>
    <cofactor evidence="2 3 4">
        <name>Co(2+)</name>
        <dbReference type="ChEBI" id="CHEBI:48828"/>
    </cofactor>
    <cofactor evidence="2 3 4">
        <name>Mn(2+)</name>
        <dbReference type="ChEBI" id="CHEBI:29035"/>
    </cofactor>
    <cofactor evidence="2 3 4">
        <name>Cd(2+)</name>
        <dbReference type="ChEBI" id="CHEBI:48775"/>
    </cofactor>
    <cofactor evidence="2 3 4">
        <name>Fe(2+)</name>
        <dbReference type="ChEBI" id="CHEBI:29033"/>
    </cofactor>
    <cofactor evidence="2 3 4">
        <name>Ni(2+)</name>
        <dbReference type="ChEBI" id="CHEBI:49786"/>
    </cofactor>
    <text evidence="2 3 4">Binds 1 divalent metal cation per subunit. The highest efficient metals are Zn(2+) and Co(2+), followed by Mn(2+), Cd(2+), Fe(2+) and Ni(2+).</text>
</comment>
<comment type="activity regulation">
    <text evidence="2 3 6 8">Inhibited by high substrate concentration and by products glucosamine 6-phosphate and acetate. Completely inactivated by the treatment with 5,5'-dithio-bis(2-nitrobenzoate) or 2,2'-dithio-pyridine (2-DPDS). Inhibited by 1,10-phenanthroline and EDTA.</text>
</comment>
<comment type="biophysicochemical properties">
    <kinetics>
        <KM evidence="3 6 8">0.3 mM for N-acetyl-glucosamine 6-phosphate (at 30 degrees Celsius and pH 7.5)</KM>
        <KM evidence="3 6 8">0.8 mM for N-acetyl-glucosamine 6-phosphate (at 37 degrees Celsius and pH 8.0)</KM>
        <KM evidence="3 6 8">20 mM for glucosamine 6-phosphate (at 30 degrees Celsius and pH 7.5)</KM>
        <KM evidence="3 6 8">20 mM for acetate (at 30 degrees Celsius and pH 7.5)</KM>
        <KM evidence="3 6 8">0.08 mM for N-acetyl-D-glucosamine-6-phosphate (at 30 degrees Celsius and pH 7.5 using Zn-reconstituted form of the enzyme)</KM>
        <KM evidence="3 6 8">1.24 mM for N-acetyl-D-galactosamine-6-phosphate (at 30 degrees Celsius and pH 7.5 using Zn-reconstituted form of the enzyme)</KM>
        <text evidence="3 6 8">kcat is 102 sec(-1) for the deacetylation of N-acetyl-D-glucosamine-6-phosphate by the Zn-enzyme. The Cd-NagA catalyzes the hydrolysis of N-thioacetyl-D-glucosamine-6-phosphate substrate about an order of magnitude better than does the Zn-substituted enzyme. The N-trifluoroacetyl substituted substrate is hydrolyzed 26 times faster than the natural substrate, but the N-formyl substrate is hydrolyzed more slowly by a factor of 5.</text>
    </kinetics>
    <phDependence>
        <text evidence="3 6 8">Optimum pH is 8.5.</text>
    </phDependence>
</comment>
<comment type="pathway">
    <text evidence="12">Amino-sugar metabolism; N-acetylneuraminate degradation; D-fructose 6-phosphate from N-acetylneuraminate: step 4/5.</text>
</comment>
<comment type="subunit">
    <text evidence="2 3 4 8">Homotetramer.</text>
</comment>
<comment type="induction">
    <text evidence="1">By N-acetylglucosamine. Induced by low extracellular levels of magnesium via the PhoQ/PhoP two-component regulatory system.</text>
</comment>
<comment type="disruption phenotype">
    <text evidence="7">Synthesizes high levels of glucosamine-6-phosphate deaminase and over half of the amount of glucosamine-6-phosphate synthase compared to wild-type.</text>
</comment>
<comment type="similarity">
    <text evidence="11">Belongs to the metallo-dependent hydrolases superfamily. NagA family.</text>
</comment>
<proteinExistence type="evidence at protein level"/>
<organism>
    <name type="scientific">Escherichia coli (strain K12)</name>
    <dbReference type="NCBI Taxonomy" id="83333"/>
    <lineage>
        <taxon>Bacteria</taxon>
        <taxon>Pseudomonadati</taxon>
        <taxon>Pseudomonadota</taxon>
        <taxon>Gammaproteobacteria</taxon>
        <taxon>Enterobacterales</taxon>
        <taxon>Enterobacteriaceae</taxon>
        <taxon>Escherichia</taxon>
    </lineage>
</organism>
<feature type="chain" id="PRO_0000170915" description="N-acetylglucosamine-6-phosphate deacetylase">
    <location>
        <begin position="1"/>
        <end position="382"/>
    </location>
</feature>
<feature type="active site" description="Proton donor/acceptor" evidence="4">
    <location>
        <position position="273"/>
    </location>
</feature>
<feature type="binding site" evidence="4">
    <location>
        <position position="131"/>
    </location>
    <ligand>
        <name>Zn(2+)</name>
        <dbReference type="ChEBI" id="CHEBI:29105"/>
    </ligand>
</feature>
<feature type="binding site" evidence="4">
    <location>
        <begin position="142"/>
        <end position="143"/>
    </location>
    <ligand>
        <name>substrate</name>
    </ligand>
</feature>
<feature type="binding site" evidence="4">
    <location>
        <position position="195"/>
    </location>
    <ligand>
        <name>Zn(2+)</name>
        <dbReference type="ChEBI" id="CHEBI:29105"/>
    </ligand>
</feature>
<feature type="binding site" evidence="4">
    <location>
        <position position="216"/>
    </location>
    <ligand>
        <name>Zn(2+)</name>
        <dbReference type="ChEBI" id="CHEBI:29105"/>
    </ligand>
</feature>
<feature type="binding site" evidence="4">
    <location>
        <begin position="219"/>
        <end position="220"/>
    </location>
    <ligand>
        <name>substrate</name>
    </ligand>
</feature>
<feature type="binding site" evidence="4">
    <location>
        <position position="227"/>
    </location>
    <ligand>
        <name>substrate</name>
    </ligand>
</feature>
<feature type="binding site" evidence="4">
    <location>
        <begin position="248"/>
        <end position="251"/>
    </location>
    <ligand>
        <name>substrate</name>
    </ligand>
</feature>
<feature type="binding site" evidence="4">
    <location>
        <begin position="306"/>
        <end position="308"/>
    </location>
    <ligand>
        <name>substrate</name>
    </ligand>
</feature>
<feature type="mutagenesis site" description="Large decrease in catalytic activity and substrate affinity, and increase in the average amount of Zn bound to the protein, suggesting that an additional metal ion can bind to this mutant; when associated with H-61." evidence="3 4">
    <original>Q</original>
    <variation>H</variation>
    <location>
        <position position="59"/>
    </location>
</feature>
<feature type="mutagenesis site" description="Large decrease in catalytic activity and substrate affinity, and increase in the average amount of Zn bound to the protein, suggesting that an additional metal ion can bind to this mutant; when associated with H-59." evidence="3">
    <original>N</original>
    <variation>H</variation>
    <location>
        <position position="61"/>
    </location>
</feature>
<feature type="mutagenesis site" description="Large reduction in the amount of the metal cofactor bound to the enzyme." evidence="3">
    <original>E</original>
    <variation>Q</variation>
    <variation>A</variation>
    <location>
        <position position="131"/>
    </location>
</feature>
<feature type="mutagenesis site" description="Dramatic decrease in catalytic activity and moderate decrease in substrate affinity, producing a 6000-fold decrease in catalytic efficiency." evidence="3">
    <original>H</original>
    <variation>N</variation>
    <location>
        <position position="143"/>
    </location>
</feature>
<feature type="mutagenesis site" description="180-fold decrease in catalytic efficiency." evidence="3">
    <original>H</original>
    <variation>Q</variation>
    <location>
        <position position="143"/>
    </location>
</feature>
<feature type="mutagenesis site" description="500-fold decrease in catalytic efficiency." evidence="3">
    <original>H</original>
    <variation>N</variation>
    <location>
        <position position="251"/>
    </location>
</feature>
<feature type="mutagenesis site" description="Loss of catalytic activity." evidence="3">
    <original>D</original>
    <variation>N</variation>
    <variation>A</variation>
    <location>
        <position position="273"/>
    </location>
</feature>
<feature type="strand" evidence="13">
    <location>
        <begin position="2"/>
        <end position="10"/>
    </location>
</feature>
<feature type="strand" evidence="13">
    <location>
        <begin position="15"/>
        <end position="24"/>
    </location>
</feature>
<feature type="strand" evidence="13">
    <location>
        <begin position="27"/>
        <end position="33"/>
    </location>
</feature>
<feature type="helix" evidence="13">
    <location>
        <begin position="34"/>
        <end position="36"/>
    </location>
</feature>
<feature type="strand" evidence="13">
    <location>
        <begin position="43"/>
        <end position="45"/>
    </location>
</feature>
<feature type="strand" evidence="13">
    <location>
        <begin position="50"/>
        <end position="53"/>
    </location>
</feature>
<feature type="strand" evidence="13">
    <location>
        <begin position="55"/>
        <end position="63"/>
    </location>
</feature>
<feature type="strand" evidence="13">
    <location>
        <begin position="66"/>
        <end position="71"/>
    </location>
</feature>
<feature type="turn" evidence="13">
    <location>
        <begin position="72"/>
        <end position="74"/>
    </location>
</feature>
<feature type="helix" evidence="13">
    <location>
        <begin position="77"/>
        <end position="89"/>
    </location>
</feature>
<feature type="strand" evidence="13">
    <location>
        <begin position="92"/>
        <end position="100"/>
    </location>
</feature>
<feature type="helix" evidence="13">
    <location>
        <begin position="104"/>
        <end position="120"/>
    </location>
</feature>
<feature type="strand" evidence="14">
    <location>
        <begin position="123"/>
        <end position="125"/>
    </location>
</feature>
<feature type="strand" evidence="13">
    <location>
        <begin position="128"/>
        <end position="131"/>
    </location>
</feature>
<feature type="helix" evidence="15">
    <location>
        <begin position="137"/>
        <end position="139"/>
    </location>
</feature>
<feature type="helix" evidence="15">
    <location>
        <begin position="145"/>
        <end position="147"/>
    </location>
</feature>
<feature type="helix" evidence="13">
    <location>
        <begin position="150"/>
        <end position="161"/>
    </location>
</feature>
<feature type="turn" evidence="13">
    <location>
        <begin position="162"/>
        <end position="165"/>
    </location>
</feature>
<feature type="strand" evidence="13">
    <location>
        <begin position="166"/>
        <end position="171"/>
    </location>
</feature>
<feature type="helix" evidence="13">
    <location>
        <begin position="173"/>
        <end position="175"/>
    </location>
</feature>
<feature type="helix" evidence="13">
    <location>
        <begin position="178"/>
        <end position="186"/>
    </location>
</feature>
<feature type="strand" evidence="13">
    <location>
        <begin position="190"/>
        <end position="193"/>
    </location>
</feature>
<feature type="helix" evidence="13">
    <location>
        <begin position="200"/>
        <end position="209"/>
    </location>
</feature>
<feature type="strand" evidence="13">
    <location>
        <begin position="213"/>
        <end position="216"/>
    </location>
</feature>
<feature type="turn" evidence="13">
    <location>
        <begin position="217"/>
        <end position="220"/>
    </location>
</feature>
<feature type="helix" evidence="13">
    <location>
        <begin position="230"/>
        <end position="237"/>
    </location>
</feature>
<feature type="strand" evidence="13">
    <location>
        <begin position="242"/>
        <end position="246"/>
    </location>
</feature>
<feature type="strand" evidence="13">
    <location>
        <begin position="248"/>
        <end position="252"/>
    </location>
</feature>
<feature type="helix" evidence="13">
    <location>
        <begin position="254"/>
        <end position="264"/>
    </location>
</feature>
<feature type="helix" evidence="13">
    <location>
        <begin position="265"/>
        <end position="267"/>
    </location>
</feature>
<feature type="strand" evidence="13">
    <location>
        <begin position="268"/>
        <end position="271"/>
    </location>
</feature>
<feature type="turn" evidence="13">
    <location>
        <begin position="276"/>
        <end position="279"/>
    </location>
</feature>
<feature type="strand" evidence="13">
    <location>
        <begin position="283"/>
        <end position="287"/>
    </location>
</feature>
<feature type="strand" evidence="13">
    <location>
        <begin position="290"/>
        <end position="294"/>
    </location>
</feature>
<feature type="strand" evidence="15">
    <location>
        <begin position="298"/>
        <end position="301"/>
    </location>
</feature>
<feature type="strand" evidence="13">
    <location>
        <begin position="306"/>
        <end position="309"/>
    </location>
</feature>
<feature type="helix" evidence="13">
    <location>
        <begin position="313"/>
        <end position="324"/>
    </location>
</feature>
<feature type="helix" evidence="13">
    <location>
        <begin position="328"/>
        <end position="335"/>
    </location>
</feature>
<feature type="helix" evidence="13">
    <location>
        <begin position="337"/>
        <end position="342"/>
    </location>
</feature>
<feature type="turn" evidence="13">
    <location>
        <begin position="346"/>
        <end position="348"/>
    </location>
</feature>
<feature type="strand" evidence="13">
    <location>
        <begin position="349"/>
        <end position="351"/>
    </location>
</feature>
<feature type="strand" evidence="13">
    <location>
        <begin position="360"/>
        <end position="363"/>
    </location>
</feature>
<feature type="strand" evidence="13">
    <location>
        <begin position="369"/>
        <end position="374"/>
    </location>
</feature>
<feature type="strand" evidence="13">
    <location>
        <begin position="377"/>
        <end position="381"/>
    </location>
</feature>
<dbReference type="EC" id="3.5.1.25" evidence="2 3 4 6 8"/>
<dbReference type="EMBL" id="X14135">
    <property type="protein sequence ID" value="CAA32353.1"/>
    <property type="molecule type" value="Genomic_DNA"/>
</dbReference>
<dbReference type="EMBL" id="AF052007">
    <property type="protein sequence ID" value="AAC09325.1"/>
    <property type="molecule type" value="Genomic_DNA"/>
</dbReference>
<dbReference type="EMBL" id="U00096">
    <property type="protein sequence ID" value="AAC73771.1"/>
    <property type="molecule type" value="Genomic_DNA"/>
</dbReference>
<dbReference type="EMBL" id="AP009048">
    <property type="protein sequence ID" value="BAA35320.1"/>
    <property type="molecule type" value="Genomic_DNA"/>
</dbReference>
<dbReference type="PIR" id="A37018">
    <property type="entry name" value="A37018"/>
</dbReference>
<dbReference type="RefSeq" id="NP_415203.1">
    <property type="nucleotide sequence ID" value="NC_000913.3"/>
</dbReference>
<dbReference type="RefSeq" id="WP_000271153.1">
    <property type="nucleotide sequence ID" value="NZ_STEB01000044.1"/>
</dbReference>
<dbReference type="PDB" id="1YMY">
    <property type="method" value="X-ray"/>
    <property type="resolution" value="2.60 A"/>
    <property type="chains" value="A/B=1-382"/>
</dbReference>
<dbReference type="PDB" id="1YRR">
    <property type="method" value="X-ray"/>
    <property type="resolution" value="2.00 A"/>
    <property type="chains" value="A/B=1-382"/>
</dbReference>
<dbReference type="PDB" id="2P50">
    <property type="method" value="X-ray"/>
    <property type="resolution" value="2.20 A"/>
    <property type="chains" value="A/B/C/D=1-382"/>
</dbReference>
<dbReference type="PDB" id="2P53">
    <property type="method" value="X-ray"/>
    <property type="resolution" value="2.10 A"/>
    <property type="chains" value="A/B=1-382"/>
</dbReference>
<dbReference type="PDBsum" id="1YMY"/>
<dbReference type="PDBsum" id="1YRR"/>
<dbReference type="PDBsum" id="2P50"/>
<dbReference type="PDBsum" id="2P53"/>
<dbReference type="SMR" id="P0AF18"/>
<dbReference type="BioGRID" id="4261208">
    <property type="interactions" value="31"/>
</dbReference>
<dbReference type="DIP" id="DIP-10297N"/>
<dbReference type="FunCoup" id="P0AF18">
    <property type="interactions" value="297"/>
</dbReference>
<dbReference type="IntAct" id="P0AF18">
    <property type="interactions" value="5"/>
</dbReference>
<dbReference type="STRING" id="511145.b0677"/>
<dbReference type="jPOST" id="P0AF18"/>
<dbReference type="PaxDb" id="511145-b0677"/>
<dbReference type="EnsemblBacteria" id="AAC73771">
    <property type="protein sequence ID" value="AAC73771"/>
    <property type="gene ID" value="b0677"/>
</dbReference>
<dbReference type="GeneID" id="75204968"/>
<dbReference type="GeneID" id="945289"/>
<dbReference type="KEGG" id="ecj:JW0663"/>
<dbReference type="KEGG" id="eco:b0677"/>
<dbReference type="KEGG" id="ecoc:C3026_03365"/>
<dbReference type="PATRIC" id="fig|1411691.4.peg.1601"/>
<dbReference type="EchoBASE" id="EB0626"/>
<dbReference type="eggNOG" id="COG1820">
    <property type="taxonomic scope" value="Bacteria"/>
</dbReference>
<dbReference type="HOGENOM" id="CLU_032482_2_2_6"/>
<dbReference type="InParanoid" id="P0AF18"/>
<dbReference type="OMA" id="PCRKGAH"/>
<dbReference type="OrthoDB" id="9776488at2"/>
<dbReference type="PhylomeDB" id="P0AF18"/>
<dbReference type="BioCyc" id="EcoCyc:NAG6PDEACET-MONOMER"/>
<dbReference type="BioCyc" id="MetaCyc:NAG6PDEACET-MONOMER"/>
<dbReference type="BRENDA" id="3.5.1.25">
    <property type="organism ID" value="2026"/>
</dbReference>
<dbReference type="SABIO-RK" id="P0AF18"/>
<dbReference type="UniPathway" id="UPA00629">
    <property type="reaction ID" value="UER00683"/>
</dbReference>
<dbReference type="EvolutionaryTrace" id="P0AF18"/>
<dbReference type="PRO" id="PR:P0AF18"/>
<dbReference type="Proteomes" id="UP000000625">
    <property type="component" value="Chromosome"/>
</dbReference>
<dbReference type="GO" id="GO:0032991">
    <property type="term" value="C:protein-containing complex"/>
    <property type="evidence" value="ECO:0000314"/>
    <property type="project" value="EcoCyc"/>
</dbReference>
<dbReference type="GO" id="GO:0042802">
    <property type="term" value="F:identical protein binding"/>
    <property type="evidence" value="ECO:0000314"/>
    <property type="project" value="EcoCyc"/>
</dbReference>
<dbReference type="GO" id="GO:0008448">
    <property type="term" value="F:N-acetylglucosamine-6-phosphate deacetylase activity"/>
    <property type="evidence" value="ECO:0000314"/>
    <property type="project" value="UniProtKB"/>
</dbReference>
<dbReference type="GO" id="GO:0008270">
    <property type="term" value="F:zinc ion binding"/>
    <property type="evidence" value="ECO:0000314"/>
    <property type="project" value="UniProtKB"/>
</dbReference>
<dbReference type="GO" id="GO:0006046">
    <property type="term" value="P:N-acetylglucosamine catabolic process"/>
    <property type="evidence" value="ECO:0000314"/>
    <property type="project" value="UniProtKB"/>
</dbReference>
<dbReference type="GO" id="GO:0019262">
    <property type="term" value="P:N-acetylneuraminate catabolic process"/>
    <property type="evidence" value="ECO:0000315"/>
    <property type="project" value="EcoCyc"/>
</dbReference>
<dbReference type="GO" id="GO:0051289">
    <property type="term" value="P:protein homotetramerization"/>
    <property type="evidence" value="ECO:0000314"/>
    <property type="project" value="UniProtKB"/>
</dbReference>
<dbReference type="CDD" id="cd00854">
    <property type="entry name" value="NagA"/>
    <property type="match status" value="1"/>
</dbReference>
<dbReference type="FunFam" id="3.20.20.140:FF:000004">
    <property type="entry name" value="N-acetylglucosamine-6-phosphate deacetylase"/>
    <property type="match status" value="1"/>
</dbReference>
<dbReference type="Gene3D" id="3.20.20.140">
    <property type="entry name" value="Metal-dependent hydrolases"/>
    <property type="match status" value="1"/>
</dbReference>
<dbReference type="Gene3D" id="2.30.40.10">
    <property type="entry name" value="Urease, subunit C, domain 1"/>
    <property type="match status" value="1"/>
</dbReference>
<dbReference type="InterPro" id="IPR006680">
    <property type="entry name" value="Amidohydro-rel"/>
</dbReference>
<dbReference type="InterPro" id="IPR003764">
    <property type="entry name" value="GlcNAc_6-P_deAcase"/>
</dbReference>
<dbReference type="InterPro" id="IPR011059">
    <property type="entry name" value="Metal-dep_hydrolase_composite"/>
</dbReference>
<dbReference type="InterPro" id="IPR032466">
    <property type="entry name" value="Metal_Hydrolase"/>
</dbReference>
<dbReference type="NCBIfam" id="TIGR00221">
    <property type="entry name" value="nagA"/>
    <property type="match status" value="1"/>
</dbReference>
<dbReference type="NCBIfam" id="NF008371">
    <property type="entry name" value="PRK11170.1"/>
    <property type="match status" value="1"/>
</dbReference>
<dbReference type="PANTHER" id="PTHR11113">
    <property type="entry name" value="N-ACETYLGLUCOSAMINE-6-PHOSPHATE DEACETYLASE"/>
    <property type="match status" value="1"/>
</dbReference>
<dbReference type="PANTHER" id="PTHR11113:SF14">
    <property type="entry name" value="N-ACETYLGLUCOSAMINE-6-PHOSPHATE DEACETYLASE"/>
    <property type="match status" value="1"/>
</dbReference>
<dbReference type="Pfam" id="PF01979">
    <property type="entry name" value="Amidohydro_1"/>
    <property type="match status" value="1"/>
</dbReference>
<dbReference type="PIRSF" id="PIRSF038994">
    <property type="entry name" value="NagA"/>
    <property type="match status" value="1"/>
</dbReference>
<dbReference type="SUPFAM" id="SSF51338">
    <property type="entry name" value="Composite domain of metallo-dependent hydrolases"/>
    <property type="match status" value="1"/>
</dbReference>
<dbReference type="SUPFAM" id="SSF51556">
    <property type="entry name" value="Metallo-dependent hydrolases"/>
    <property type="match status" value="1"/>
</dbReference>
<name>NAGA_ECOLI</name>
<sequence length="382" mass="40949">MYALTQGRIFTGHEFLDDHAVVIADGLIKSVCPVAELPPEIEQRSLNGAILSPGFIDVQLNGCGGVQFNDTAEAVSVETLEIMQKANEKSGCTNYLPTLITTSDELMKQGVRVMREYLAKHPNQALGLHLEGPWLNLVKKGTHNPNFVRKPDAALVDFLCENADVITKVTLAPEMVPAEVISKLANAGIVVSAGHSNATLKEAKAGFRAGITFATHLYNAMPYITGREPGLAGAILDEADIYCGIIADGLHVDYANIRNAKRLKGDKLCLVTDATAPAGANIEQFIFAGKTIYYRNGLCVDENGTLSGSSLTMIEGVRNLVEHCGIALDEVLRMATLYPARAIGVEKRLGTLAAGKVANLTAFTPDFKITKTIVNGNEVVTQ</sequence>
<protein>
    <recommendedName>
        <fullName evidence="9">N-acetylglucosamine-6-phosphate deacetylase</fullName>
        <shortName evidence="10">GlcNAc 6-P deacetylase</shortName>
        <ecNumber evidence="2 3 4 6 8">3.5.1.25</ecNumber>
    </recommendedName>
</protein>
<evidence type="ECO:0000269" key="1">
    <source>
    </source>
</evidence>
<evidence type="ECO:0000269" key="2">
    <source>
    </source>
</evidence>
<evidence type="ECO:0000269" key="3">
    <source>
    </source>
</evidence>
<evidence type="ECO:0000269" key="4">
    <source>
    </source>
</evidence>
<evidence type="ECO:0000269" key="5">
    <source>
    </source>
</evidence>
<evidence type="ECO:0000269" key="6">
    <source>
    </source>
</evidence>
<evidence type="ECO:0000269" key="7">
    <source>
    </source>
</evidence>
<evidence type="ECO:0000269" key="8">
    <source>
    </source>
</evidence>
<evidence type="ECO:0000303" key="9">
    <source>
    </source>
</evidence>
<evidence type="ECO:0000303" key="10">
    <source>
    </source>
</evidence>
<evidence type="ECO:0000305" key="11"/>
<evidence type="ECO:0000305" key="12">
    <source>
    </source>
</evidence>
<evidence type="ECO:0007829" key="13">
    <source>
        <dbReference type="PDB" id="1YRR"/>
    </source>
</evidence>
<evidence type="ECO:0007829" key="14">
    <source>
        <dbReference type="PDB" id="2P50"/>
    </source>
</evidence>
<evidence type="ECO:0007829" key="15">
    <source>
        <dbReference type="PDB" id="2P53"/>
    </source>
</evidence>
<keyword id="KW-0002">3D-structure</keyword>
<keyword id="KW-0119">Carbohydrate metabolism</keyword>
<keyword id="KW-0378">Hydrolase</keyword>
<keyword id="KW-0479">Metal-binding</keyword>
<keyword id="KW-1185">Reference proteome</keyword>
<keyword id="KW-0862">Zinc</keyword>